<gene>
    <name evidence="1" type="primary">lysS</name>
    <name type="ordered locus">A1I_02545</name>
</gene>
<comment type="catalytic activity">
    <reaction evidence="1">
        <text>tRNA(Lys) + L-lysine + ATP = L-lysyl-tRNA(Lys) + AMP + diphosphate</text>
        <dbReference type="Rhea" id="RHEA:20792"/>
        <dbReference type="Rhea" id="RHEA-COMP:9696"/>
        <dbReference type="Rhea" id="RHEA-COMP:9697"/>
        <dbReference type="ChEBI" id="CHEBI:30616"/>
        <dbReference type="ChEBI" id="CHEBI:32551"/>
        <dbReference type="ChEBI" id="CHEBI:33019"/>
        <dbReference type="ChEBI" id="CHEBI:78442"/>
        <dbReference type="ChEBI" id="CHEBI:78529"/>
        <dbReference type="ChEBI" id="CHEBI:456215"/>
        <dbReference type="EC" id="6.1.1.6"/>
    </reaction>
</comment>
<comment type="subcellular location">
    <subcellularLocation>
        <location evidence="1">Cytoplasm</location>
    </subcellularLocation>
</comment>
<comment type="similarity">
    <text evidence="1">Belongs to the class-I aminoacyl-tRNA synthetase family.</text>
</comment>
<sequence length="522" mass="60157">MSEILEDAIKSKAWPFEEAKKILDSLNGKTPEKGYVLFETGYGPSGLPHIGTFGENARMVMVQKAFEQLSNIKTKLICFSDDMDGLRKVPSNIPNPEMVAGYMDMPLTSIPDPFGECESYGHYMNAKLRSFLDKFGFEYEFYSSTEMYKAGMFDEMLIRVLEKYDEIMELMLPTFREERKATYSPFMPICPKTGKVLQVPIHKWDAKLGTITYKDENGETIEVPVTKGHCKLQWKPDFSMRWAALKVDYEMYGKDHLANGRLYSEICRILGGKPPVQLCYELFLDENGEKISKSKGNSISVDDWLKYAPVESMALFMYQNPTRAKRLFFDVIPKNVDEYITFNQKYHLEEDRTKRFANPVYHIHHGNVPKIETFGITYSLLLNLTSVCNPSDKSVLWGFISRYEPKAMPNNSPYLDHLAEFAIRYYNDFVKAHKSYLAPSEKHKAILQDILDMLKGLPEQIEAESIQKGIYDIGMKAGYENLRDYFKDLYQILLGQSDGPRLGTFIKLYGISETMKLIEEKL</sequence>
<accession>A8GVK6</accession>
<dbReference type="EC" id="6.1.1.6" evidence="1"/>
<dbReference type="EMBL" id="CP000849">
    <property type="protein sequence ID" value="ABV78883.1"/>
    <property type="molecule type" value="Genomic_DNA"/>
</dbReference>
<dbReference type="RefSeq" id="WP_012151715.1">
    <property type="nucleotide sequence ID" value="NC_009883.1"/>
</dbReference>
<dbReference type="SMR" id="A8GVK6"/>
<dbReference type="KEGG" id="rbo:A1I_02545"/>
<dbReference type="HOGENOM" id="CLU_025562_2_0_5"/>
<dbReference type="GO" id="GO:0005737">
    <property type="term" value="C:cytoplasm"/>
    <property type="evidence" value="ECO:0007669"/>
    <property type="project" value="UniProtKB-SubCell"/>
</dbReference>
<dbReference type="GO" id="GO:0005524">
    <property type="term" value="F:ATP binding"/>
    <property type="evidence" value="ECO:0007669"/>
    <property type="project" value="UniProtKB-UniRule"/>
</dbReference>
<dbReference type="GO" id="GO:0004824">
    <property type="term" value="F:lysine-tRNA ligase activity"/>
    <property type="evidence" value="ECO:0007669"/>
    <property type="project" value="UniProtKB-UniRule"/>
</dbReference>
<dbReference type="GO" id="GO:0000049">
    <property type="term" value="F:tRNA binding"/>
    <property type="evidence" value="ECO:0007669"/>
    <property type="project" value="InterPro"/>
</dbReference>
<dbReference type="GO" id="GO:0006430">
    <property type="term" value="P:lysyl-tRNA aminoacylation"/>
    <property type="evidence" value="ECO:0007669"/>
    <property type="project" value="UniProtKB-UniRule"/>
</dbReference>
<dbReference type="Gene3D" id="1.10.10.350">
    <property type="match status" value="1"/>
</dbReference>
<dbReference type="Gene3D" id="3.40.50.620">
    <property type="entry name" value="HUPs"/>
    <property type="match status" value="2"/>
</dbReference>
<dbReference type="HAMAP" id="MF_00177">
    <property type="entry name" value="Lys_tRNA_synth_class1"/>
    <property type="match status" value="1"/>
</dbReference>
<dbReference type="InterPro" id="IPR020751">
    <property type="entry name" value="aa-tRNA-synth_I_codon-bd_sub2"/>
</dbReference>
<dbReference type="InterPro" id="IPR001412">
    <property type="entry name" value="aa-tRNA-synth_I_CS"/>
</dbReference>
<dbReference type="InterPro" id="IPR008925">
    <property type="entry name" value="aa_tRNA-synth_I_cd-bd_sf"/>
</dbReference>
<dbReference type="InterPro" id="IPR002904">
    <property type="entry name" value="Lys-tRNA-ligase"/>
</dbReference>
<dbReference type="InterPro" id="IPR014729">
    <property type="entry name" value="Rossmann-like_a/b/a_fold"/>
</dbReference>
<dbReference type="NCBIfam" id="TIGR00467">
    <property type="entry name" value="lysS_arch"/>
    <property type="match status" value="1"/>
</dbReference>
<dbReference type="NCBIfam" id="NF001968">
    <property type="entry name" value="PRK00750.1-2"/>
    <property type="match status" value="1"/>
</dbReference>
<dbReference type="PANTHER" id="PTHR37940">
    <property type="entry name" value="LYSINE--TRNA LIGASE"/>
    <property type="match status" value="1"/>
</dbReference>
<dbReference type="PANTHER" id="PTHR37940:SF1">
    <property type="entry name" value="LYSINE--TRNA LIGASE"/>
    <property type="match status" value="1"/>
</dbReference>
<dbReference type="Pfam" id="PF01921">
    <property type="entry name" value="tRNA-synt_1f"/>
    <property type="match status" value="1"/>
</dbReference>
<dbReference type="SUPFAM" id="SSF48163">
    <property type="entry name" value="An anticodon-binding domain of class I aminoacyl-tRNA synthetases"/>
    <property type="match status" value="1"/>
</dbReference>
<dbReference type="SUPFAM" id="SSF52374">
    <property type="entry name" value="Nucleotidylyl transferase"/>
    <property type="match status" value="1"/>
</dbReference>
<dbReference type="PROSITE" id="PS00178">
    <property type="entry name" value="AA_TRNA_LIGASE_I"/>
    <property type="match status" value="1"/>
</dbReference>
<evidence type="ECO:0000255" key="1">
    <source>
        <dbReference type="HAMAP-Rule" id="MF_00177"/>
    </source>
</evidence>
<keyword id="KW-0030">Aminoacyl-tRNA synthetase</keyword>
<keyword id="KW-0067">ATP-binding</keyword>
<keyword id="KW-0963">Cytoplasm</keyword>
<keyword id="KW-0436">Ligase</keyword>
<keyword id="KW-0547">Nucleotide-binding</keyword>
<keyword id="KW-0648">Protein biosynthesis</keyword>
<organism>
    <name type="scientific">Rickettsia bellii (strain OSU 85-389)</name>
    <dbReference type="NCBI Taxonomy" id="391896"/>
    <lineage>
        <taxon>Bacteria</taxon>
        <taxon>Pseudomonadati</taxon>
        <taxon>Pseudomonadota</taxon>
        <taxon>Alphaproteobacteria</taxon>
        <taxon>Rickettsiales</taxon>
        <taxon>Rickettsiaceae</taxon>
        <taxon>Rickettsieae</taxon>
        <taxon>Rickettsia</taxon>
        <taxon>belli group</taxon>
    </lineage>
</organism>
<reference key="1">
    <citation type="submission" date="2007-09" db="EMBL/GenBank/DDBJ databases">
        <title>Complete genome sequencing of Rickettsia bellii.</title>
        <authorList>
            <person name="Madan A."/>
            <person name="Lee H."/>
            <person name="Madan A."/>
            <person name="Yoon J.-G."/>
            <person name="Ryu G.-Y."/>
            <person name="Dasch G."/>
            <person name="Ereemeva M."/>
        </authorList>
    </citation>
    <scope>NUCLEOTIDE SEQUENCE [LARGE SCALE GENOMIC DNA]</scope>
    <source>
        <strain>OSU 85-389</strain>
    </source>
</reference>
<proteinExistence type="inferred from homology"/>
<feature type="chain" id="PRO_1000040351" description="Lysine--tRNA ligase">
    <location>
        <begin position="1"/>
        <end position="522"/>
    </location>
</feature>
<feature type="short sequence motif" description="'HIGH' region">
    <location>
        <begin position="44"/>
        <end position="52"/>
    </location>
</feature>
<feature type="short sequence motif" description="'KMSKS' region">
    <location>
        <begin position="290"/>
        <end position="294"/>
    </location>
</feature>
<feature type="binding site" evidence="1">
    <location>
        <position position="293"/>
    </location>
    <ligand>
        <name>ATP</name>
        <dbReference type="ChEBI" id="CHEBI:30616"/>
    </ligand>
</feature>
<protein>
    <recommendedName>
        <fullName evidence="1">Lysine--tRNA ligase</fullName>
        <ecNumber evidence="1">6.1.1.6</ecNumber>
    </recommendedName>
    <alternativeName>
        <fullName evidence="1">Lysyl-tRNA synthetase</fullName>
        <shortName evidence="1">LysRS</shortName>
    </alternativeName>
</protein>
<name>SYK_RICB8</name>